<feature type="chain" id="PRO_0000411326" description="DNA polymerase III polC-type">
    <location>
        <begin position="1"/>
        <end position="1465"/>
    </location>
</feature>
<feature type="domain" description="Exonuclease">
    <location>
        <begin position="427"/>
        <end position="583"/>
    </location>
</feature>
<keyword id="KW-0963">Cytoplasm</keyword>
<keyword id="KW-0235">DNA replication</keyword>
<keyword id="KW-0239">DNA-directed DNA polymerase</keyword>
<keyword id="KW-0269">Exonuclease</keyword>
<keyword id="KW-0378">Hydrolase</keyword>
<keyword id="KW-0540">Nuclease</keyword>
<keyword id="KW-0548">Nucleotidyltransferase</keyword>
<keyword id="KW-0808">Transferase</keyword>
<evidence type="ECO:0000255" key="1">
    <source>
        <dbReference type="HAMAP-Rule" id="MF_00356"/>
    </source>
</evidence>
<name>DPO3_STRPQ</name>
<gene>
    <name evidence="1" type="primary">polC</name>
    <name type="ordered locus">SPs1689</name>
</gene>
<reference key="1">
    <citation type="journal article" date="2003" name="Genome Res.">
        <title>Genome sequence of an M3 strain of Streptococcus pyogenes reveals a large-scale genomic rearrangement in invasive strains and new insights into phage evolution.</title>
        <authorList>
            <person name="Nakagawa I."/>
            <person name="Kurokawa K."/>
            <person name="Yamashita A."/>
            <person name="Nakata M."/>
            <person name="Tomiyasu Y."/>
            <person name="Okahashi N."/>
            <person name="Kawabata S."/>
            <person name="Yamazaki K."/>
            <person name="Shiba T."/>
            <person name="Yasunaga T."/>
            <person name="Hayashi H."/>
            <person name="Hattori M."/>
            <person name="Hamada S."/>
        </authorList>
    </citation>
    <scope>NUCLEOTIDE SEQUENCE [LARGE SCALE GENOMIC DNA]</scope>
    <source>
        <strain>SSI-1</strain>
    </source>
</reference>
<comment type="function">
    <text evidence="1">Required for replicative DNA synthesis. This DNA polymerase also exhibits 3' to 5' exonuclease activity.</text>
</comment>
<comment type="catalytic activity">
    <reaction evidence="1">
        <text>DNA(n) + a 2'-deoxyribonucleoside 5'-triphosphate = DNA(n+1) + diphosphate</text>
        <dbReference type="Rhea" id="RHEA:22508"/>
        <dbReference type="Rhea" id="RHEA-COMP:17339"/>
        <dbReference type="Rhea" id="RHEA-COMP:17340"/>
        <dbReference type="ChEBI" id="CHEBI:33019"/>
        <dbReference type="ChEBI" id="CHEBI:61560"/>
        <dbReference type="ChEBI" id="CHEBI:173112"/>
        <dbReference type="EC" id="2.7.7.7"/>
    </reaction>
</comment>
<comment type="subcellular location">
    <subcellularLocation>
        <location evidence="1">Cytoplasm</location>
    </subcellularLocation>
</comment>
<comment type="similarity">
    <text evidence="1">Belongs to the DNA polymerase type-C family. PolC subfamily.</text>
</comment>
<dbReference type="EC" id="2.7.7.7" evidence="1"/>
<dbReference type="EMBL" id="BA000034">
    <property type="protein sequence ID" value="BAC64784.1"/>
    <property type="molecule type" value="Genomic_DNA"/>
</dbReference>
<dbReference type="RefSeq" id="WP_011055020.1">
    <property type="nucleotide sequence ID" value="NC_004606.1"/>
</dbReference>
<dbReference type="SMR" id="P0DA77"/>
<dbReference type="KEGG" id="sps:SPs1689"/>
<dbReference type="HOGENOM" id="CLU_003297_2_0_9"/>
<dbReference type="GO" id="GO:0005737">
    <property type="term" value="C:cytoplasm"/>
    <property type="evidence" value="ECO:0007669"/>
    <property type="project" value="UniProtKB-SubCell"/>
</dbReference>
<dbReference type="GO" id="GO:0008408">
    <property type="term" value="F:3'-5' exonuclease activity"/>
    <property type="evidence" value="ECO:0007669"/>
    <property type="project" value="UniProtKB-UniRule"/>
</dbReference>
<dbReference type="GO" id="GO:0003677">
    <property type="term" value="F:DNA binding"/>
    <property type="evidence" value="ECO:0007669"/>
    <property type="project" value="UniProtKB-UniRule"/>
</dbReference>
<dbReference type="GO" id="GO:0003887">
    <property type="term" value="F:DNA-directed DNA polymerase activity"/>
    <property type="evidence" value="ECO:0007669"/>
    <property type="project" value="UniProtKB-UniRule"/>
</dbReference>
<dbReference type="GO" id="GO:0006261">
    <property type="term" value="P:DNA-templated DNA replication"/>
    <property type="evidence" value="ECO:0007669"/>
    <property type="project" value="UniProtKB-UniRule"/>
</dbReference>
<dbReference type="CDD" id="cd06127">
    <property type="entry name" value="DEDDh"/>
    <property type="match status" value="1"/>
</dbReference>
<dbReference type="CDD" id="cd07435">
    <property type="entry name" value="PHP_PolIIIA_POLC"/>
    <property type="match status" value="1"/>
</dbReference>
<dbReference type="CDD" id="cd04484">
    <property type="entry name" value="polC_OBF"/>
    <property type="match status" value="1"/>
</dbReference>
<dbReference type="FunFam" id="3.30.420.10:FF:000045">
    <property type="entry name" value="3'-5' exonuclease DinG"/>
    <property type="match status" value="1"/>
</dbReference>
<dbReference type="Gene3D" id="1.10.150.870">
    <property type="match status" value="1"/>
</dbReference>
<dbReference type="Gene3D" id="3.30.1900.20">
    <property type="match status" value="1"/>
</dbReference>
<dbReference type="Gene3D" id="6.10.140.1510">
    <property type="match status" value="1"/>
</dbReference>
<dbReference type="Gene3D" id="3.20.20.140">
    <property type="entry name" value="Metal-dependent hydrolases"/>
    <property type="match status" value="1"/>
</dbReference>
<dbReference type="Gene3D" id="2.40.50.140">
    <property type="entry name" value="Nucleic acid-binding proteins"/>
    <property type="match status" value="1"/>
</dbReference>
<dbReference type="Gene3D" id="1.10.150.700">
    <property type="entry name" value="PolC, middle finger domain"/>
    <property type="match status" value="1"/>
</dbReference>
<dbReference type="Gene3D" id="3.30.420.10">
    <property type="entry name" value="Ribonuclease H-like superfamily/Ribonuclease H"/>
    <property type="match status" value="1"/>
</dbReference>
<dbReference type="HAMAP" id="MF_00356">
    <property type="entry name" value="DNApol_PolC"/>
    <property type="match status" value="1"/>
</dbReference>
<dbReference type="InterPro" id="IPR011708">
    <property type="entry name" value="DNA_pol3_alpha_NTPase_dom"/>
</dbReference>
<dbReference type="InterPro" id="IPR040982">
    <property type="entry name" value="DNA_pol3_finger"/>
</dbReference>
<dbReference type="InterPro" id="IPR024754">
    <property type="entry name" value="DNA_PolC-like_N_II"/>
</dbReference>
<dbReference type="InterPro" id="IPR028112">
    <property type="entry name" value="DNA_PolC-type_N_I"/>
</dbReference>
<dbReference type="InterPro" id="IPR004805">
    <property type="entry name" value="DnaE2/DnaE/PolC"/>
</dbReference>
<dbReference type="InterPro" id="IPR029460">
    <property type="entry name" value="DNAPol_HHH"/>
</dbReference>
<dbReference type="InterPro" id="IPR006054">
    <property type="entry name" value="DnaQ"/>
</dbReference>
<dbReference type="InterPro" id="IPR013520">
    <property type="entry name" value="Exonuclease_RNaseT/DNA_pol3"/>
</dbReference>
<dbReference type="InterPro" id="IPR012340">
    <property type="entry name" value="NA-bd_OB-fold"/>
</dbReference>
<dbReference type="InterPro" id="IPR004013">
    <property type="entry name" value="PHP_dom"/>
</dbReference>
<dbReference type="InterPro" id="IPR003141">
    <property type="entry name" value="Pol/His_phosphatase_N"/>
</dbReference>
<dbReference type="InterPro" id="IPR016195">
    <property type="entry name" value="Pol/histidinol_Pase-like"/>
</dbReference>
<dbReference type="InterPro" id="IPR006308">
    <property type="entry name" value="Pol_III_a_PolC-type_gram_pos"/>
</dbReference>
<dbReference type="InterPro" id="IPR044923">
    <property type="entry name" value="PolC_middle_finger_sf"/>
</dbReference>
<dbReference type="InterPro" id="IPR012337">
    <property type="entry name" value="RNaseH-like_sf"/>
</dbReference>
<dbReference type="InterPro" id="IPR036397">
    <property type="entry name" value="RNaseH_sf"/>
</dbReference>
<dbReference type="NCBIfam" id="TIGR00573">
    <property type="entry name" value="dnaq"/>
    <property type="match status" value="1"/>
</dbReference>
<dbReference type="NCBIfam" id="TIGR01405">
    <property type="entry name" value="polC_Gram_pos"/>
    <property type="match status" value="1"/>
</dbReference>
<dbReference type="NCBIfam" id="NF001688">
    <property type="entry name" value="PRK00448.1"/>
    <property type="match status" value="1"/>
</dbReference>
<dbReference type="PANTHER" id="PTHR32294:SF5">
    <property type="entry name" value="DNA POLYMERASE III POLC-TYPE"/>
    <property type="match status" value="1"/>
</dbReference>
<dbReference type="PANTHER" id="PTHR32294">
    <property type="entry name" value="DNA POLYMERASE III SUBUNIT ALPHA"/>
    <property type="match status" value="1"/>
</dbReference>
<dbReference type="Pfam" id="PF14480">
    <property type="entry name" value="DNA_pol3_a_NI"/>
    <property type="match status" value="1"/>
</dbReference>
<dbReference type="Pfam" id="PF11490">
    <property type="entry name" value="DNA_pol3_a_NII"/>
    <property type="match status" value="1"/>
</dbReference>
<dbReference type="Pfam" id="PF07733">
    <property type="entry name" value="DNA_pol3_alpha"/>
    <property type="match status" value="2"/>
</dbReference>
<dbReference type="Pfam" id="PF17657">
    <property type="entry name" value="DNA_pol3_finger"/>
    <property type="match status" value="1"/>
</dbReference>
<dbReference type="Pfam" id="PF14579">
    <property type="entry name" value="HHH_6"/>
    <property type="match status" value="1"/>
</dbReference>
<dbReference type="Pfam" id="PF02811">
    <property type="entry name" value="PHP"/>
    <property type="match status" value="2"/>
</dbReference>
<dbReference type="Pfam" id="PF00929">
    <property type="entry name" value="RNase_T"/>
    <property type="match status" value="1"/>
</dbReference>
<dbReference type="SMART" id="SM00479">
    <property type="entry name" value="EXOIII"/>
    <property type="match status" value="1"/>
</dbReference>
<dbReference type="SMART" id="SM00481">
    <property type="entry name" value="POLIIIAc"/>
    <property type="match status" value="1"/>
</dbReference>
<dbReference type="SUPFAM" id="SSF50249">
    <property type="entry name" value="Nucleic acid-binding proteins"/>
    <property type="match status" value="1"/>
</dbReference>
<dbReference type="SUPFAM" id="SSF89550">
    <property type="entry name" value="PHP domain-like"/>
    <property type="match status" value="1"/>
</dbReference>
<dbReference type="SUPFAM" id="SSF53098">
    <property type="entry name" value="Ribonuclease H-like"/>
    <property type="match status" value="1"/>
</dbReference>
<organism>
    <name type="scientific">Streptococcus pyogenes serotype M3 (strain SSI-1)</name>
    <dbReference type="NCBI Taxonomy" id="193567"/>
    <lineage>
        <taxon>Bacteria</taxon>
        <taxon>Bacillati</taxon>
        <taxon>Bacillota</taxon>
        <taxon>Bacilli</taxon>
        <taxon>Lactobacillales</taxon>
        <taxon>Streptococcaceae</taxon>
        <taxon>Streptococcus</taxon>
    </lineage>
</organism>
<proteinExistence type="inferred from homology"/>
<sequence>MSDLFAKLMDQIEMPLDMRRSSAFSSADIIEVKVHSVSRLWEFHFAFAAVLPIATYRELHDRLIRTFEAADIKVTFDIQAAQVDYSDDLLQAYYQEAFEHAPCNSASFKSSFSKLKVTYEDDKLIIAAPGFVNNDHFRNNHLPNLVKQLEAFGFGTLTIDMVSDQEMTEHLTKNFVSSRQALVKKAVQDNLEAQKSLEAMMPPVEEATPAPKFDYKERAAKRQAGFEKATITPMIEIETEENRIVFEGMVFDVERKTTRTGRHIINFKMTDYTSSFALQKWAKDDEELRKFDMIAKGVWLRVQGNIETNPFTKSLTMNVQQVKEIVHHERKDLMPEGQKRVELHAHTNMSTMDALLTVESLIDTAAKWGHKAVAITDHANVQSFPHGYHRARKAGIKAIFGLEANIVEDKVPISYDPVDMDLHEATYVVFDVETTGLSAMNNDLIQIAASKMFKGNIVEQFDEFIDPGHPLSAFTTELTGITDKHLQGAKPLVTVLKAFQDFCKDSILVAHNASFDVGFMNANYERHDLPKITQPVIDTLEFARNLYPEYKRHGLGPLTKRFQVSLDHHHMANYDAEATGRLLFIFLKDAREKHGIKNLLQLNTDLVAEDSYKKARIKHATIYVQNQVGLKNMFKLVSLSNIKYFEGVPRIPRTVLDAHREGLLLGTACSDGEVFDAVLTKGIDAAVDLAKYYDFIEIMPPAIYQPLVVRELIKDQAGIEQVIRDLIEVGKRAKKPVLATGNVHYLEPEEEIYREIIVRSLGQGAMINRTIGRGEGAQPAPLPKAHFRTTNEMLDEFAFLGKDLAYQVVVENTQDFADRIEEVEVVKGDLYTPYIDKAEETVAELTYQKAFEIYGNPLPDIIDLRIEKELTSILGNGFAVIYLASQMLVNRSNERGYLVGSRGSVGSSFVATMIGITEVNPMPPHYVCPSCQHSEFITDGSVGSGYDLPNKACPKCGTPYQKDGQDIPFETFLGFDGDKVPDIDLNFSGDDQPSAHLDVRDIFGAEYAFRAGTVGTVAEKTAYGFVKGYERDYGKFYRDAEVDRLAAGAAGVKRTTGQHPGGIVVIPNYMDVYDFTPVQYPADDVTASWQTTHFNFHDIDENVLKLDILGHDDPTMIRKLQDLSGIDPITIPADDPGVMALFSGTEVLGVTPEQIGTPTGMLGIPEFGTNFVRGMVNETHPTTFAELLQLSGLSHGTDVWLGNAQDLIKEGIATLKTVIGCRDDIMVYLMHAGLEPKMAFTIMERVRKGLWLKISEEERNGYIDAMRENNVPDWYIESCGKIKYMFPKAHAAAYVLMALRVAYFKVHHPIMYYCAYFSIRAKAFELKTMSGGLDAVKARMEDITIKRKNNEATNVENDLFTTLEIVNEMLERGFKFGKLDLYKSDAIEFQIKGDTLIPPFIALEGLGENVAKQIVKARQEGEFLSKMELRKRGGASSTLVEKMDEMGILGNMPEDNQLSLFDDFF</sequence>
<protein>
    <recommendedName>
        <fullName>DNA polymerase III polC-type</fullName>
        <shortName evidence="1">PolIII</shortName>
        <ecNumber evidence="1">2.7.7.7</ecNumber>
    </recommendedName>
</protein>
<accession>P0DA77</accession>
<accession>Q8K5S8</accession>